<comment type="function">
    <text>Clathrin is the major protein of the polyhedral coat of coated pits and vesicles.</text>
</comment>
<comment type="subunit">
    <text evidence="2 3">Clathrin triskelions, composed of 3 heavy chains and 3 light chains, are the basic subunits of the clathrin coat (By similarity). Interacts with sau (PubMed:24786584).</text>
</comment>
<comment type="interaction">
    <interactant intactId="EBI-160368">
        <id>P29742</id>
    </interactant>
    <interactant intactId="EBI-112159">
        <id>P16568</id>
        <label>BicD</label>
    </interactant>
    <organismsDiffer>false</organismsDiffer>
    <experiments>5</experiments>
</comment>
<comment type="subcellular location">
    <subcellularLocation>
        <location>Cytoplasmic vesicle membrane</location>
        <topology>Peripheral membrane protein</topology>
        <orientation>Cytoplasmic side</orientation>
    </subcellularLocation>
    <subcellularLocation>
        <location>Membrane</location>
        <location>Coated pit</location>
        <topology>Peripheral membrane protein</topology>
        <orientation>Cytoplasmic side</orientation>
    </subcellularLocation>
    <text>Cytoplasmic face of coated pits and vesicles.</text>
</comment>
<comment type="domain">
    <text>The C-terminal third of the heavy chains forms the hub of the triskelion. This region contains the trimerization domain and the light-chain binding domain involved in the assembly of the clathrin lattice.</text>
</comment>
<comment type="domain">
    <text evidence="1">The N-terminal seven-bladed beta-propeller is formed by WD40-like repeats, and projects inward from the polyhedral outer clathrin coat. It constitutes a major protein-protein interaction node (By similarity).</text>
</comment>
<comment type="similarity">
    <text evidence="4">Belongs to the clathrin heavy chain family.</text>
</comment>
<accession>P29742</accession>
<accession>Q540W2</accession>
<accession>Q9VXN6</accession>
<proteinExistence type="evidence at protein level"/>
<protein>
    <recommendedName>
        <fullName>Clathrin heavy chain</fullName>
    </recommendedName>
</protein>
<organism>
    <name type="scientific">Drosophila melanogaster</name>
    <name type="common">Fruit fly</name>
    <dbReference type="NCBI Taxonomy" id="7227"/>
    <lineage>
        <taxon>Eukaryota</taxon>
        <taxon>Metazoa</taxon>
        <taxon>Ecdysozoa</taxon>
        <taxon>Arthropoda</taxon>
        <taxon>Hexapoda</taxon>
        <taxon>Insecta</taxon>
        <taxon>Pterygota</taxon>
        <taxon>Neoptera</taxon>
        <taxon>Endopterygota</taxon>
        <taxon>Diptera</taxon>
        <taxon>Brachycera</taxon>
        <taxon>Muscomorpha</taxon>
        <taxon>Ephydroidea</taxon>
        <taxon>Drosophilidae</taxon>
        <taxon>Drosophila</taxon>
        <taxon>Sophophora</taxon>
    </lineage>
</organism>
<gene>
    <name type="primary">Chc</name>
    <name type="ORF">CG9012</name>
</gene>
<feature type="chain" id="PRO_0000205783" description="Clathrin heavy chain">
    <location>
        <begin position="1"/>
        <end position="1678"/>
    </location>
</feature>
<feature type="repeat" description="CHCR 1">
    <location>
        <begin position="538"/>
        <end position="684"/>
    </location>
</feature>
<feature type="repeat" description="CHCR 2">
    <location>
        <begin position="687"/>
        <end position="829"/>
    </location>
</feature>
<feature type="repeat" description="CHCR 3">
    <location>
        <begin position="834"/>
        <end position="973"/>
    </location>
</feature>
<feature type="repeat" description="CHCR 4">
    <location>
        <begin position="980"/>
        <end position="1125"/>
    </location>
</feature>
<feature type="repeat" description="CHCR 5">
    <location>
        <begin position="1129"/>
        <end position="1270"/>
    </location>
</feature>
<feature type="repeat" description="CHCR 6">
    <location>
        <begin position="1275"/>
        <end position="1421"/>
    </location>
</feature>
<feature type="repeat" description="CHCR 7">
    <location>
        <begin position="1424"/>
        <end position="1567"/>
    </location>
</feature>
<feature type="region of interest" description="WD40-like repeat 1">
    <location>
        <begin position="24"/>
        <end position="67"/>
    </location>
</feature>
<feature type="region of interest" description="WD40-like repeat 2">
    <location>
        <begin position="68"/>
        <end position="107"/>
    </location>
</feature>
<feature type="region of interest" description="WD40-like repeat 3">
    <location>
        <begin position="108"/>
        <end position="149"/>
    </location>
</feature>
<feature type="region of interest" description="WD40-like repeat 4">
    <location>
        <begin position="150"/>
        <end position="195"/>
    </location>
</feature>
<feature type="region of interest" description="WD40-like repeat 5">
    <location>
        <begin position="196"/>
        <end position="257"/>
    </location>
</feature>
<feature type="region of interest" description="WD40-like repeat 6">
    <location>
        <begin position="258"/>
        <end position="301"/>
    </location>
</feature>
<feature type="region of interest" description="WD40-like repeat 7">
    <location>
        <begin position="302"/>
        <end position="330"/>
    </location>
</feature>
<feature type="region of interest" description="Involved in binding clathrin light chain" evidence="1">
    <location>
        <begin position="1334"/>
        <end position="1643"/>
    </location>
</feature>
<feature type="region of interest" description="Trimerization" evidence="1">
    <location>
        <begin position="1552"/>
        <end position="1677"/>
    </location>
</feature>
<name>CLH_DROME</name>
<keyword id="KW-0168">Coated pit</keyword>
<keyword id="KW-0968">Cytoplasmic vesicle</keyword>
<keyword id="KW-0472">Membrane</keyword>
<keyword id="KW-1185">Reference proteome</keyword>
<keyword id="KW-0677">Repeat</keyword>
<evidence type="ECO:0000250" key="1"/>
<evidence type="ECO:0000250" key="2">
    <source>
        <dbReference type="UniProtKB" id="Q00610"/>
    </source>
</evidence>
<evidence type="ECO:0000269" key="3">
    <source>
    </source>
</evidence>
<evidence type="ECO:0000305" key="4"/>
<sequence length="1678" mass="191177">MTQPLPIRFQEHLQLTNVGINANSFSFSTLTMESDKFICVREKVNDTAQVVIIDMNDATNPTRRPISADSAIMNPASKVIALKAQKTLQIFNIEMKSKMKAHTMNEDVVFWKWISLNTLALVTETSVFHWSMEGDSMPQKMFDRHSSLNGCQIINYRCNASQQWLLLVGISALPSRVAGAMQLYSVERKVSQAIEGHAASFATFKIDANKEPTTLFCFAVRTATGGKLHIIEVGAPPNGNQPFAKKAVDVFFPPEAQNDFPVAMQVSAKYDTIYLITKYGYIHLYDMETATCIYMNRISADTIFVTAPHEASGGIIGVNRKGQVLSVTVDEEQIIPYINTVLQNPDLALRMAVRNNLAGAEDLFVRKFNKLFTAGQYAEAAKVAALAPKAILRTPQTIQRFQQVQTPAGSTTPPLLQYFGILLDQGKLNKFESLELCRPVLLQGKKQLCEKWLKEEKLECSEELGDLVKASDLTLALSIYLRANVPNKVIQCFAETGQFQKIVLYAKKVNYTPDYVFLLRSVMRSNPEQGAGFASMLVAEEEPLADINQIVDIFMEHSMVQQCTAFLLDALKHNRPAEGALQTRLLEMNLMSAPQVADAILGNAMFTHYDRAHIAQLCEKAGLLQRALEHYTDLYDIKRAVVHTHMLNAEWLVSFFGTLSVEDSLECLKAMLTANLRQNLQICVQIATKYHEQLTNKALIDLFEGFKSYDGLFYFLSSIVNFSQDPEVHFKYIQAACKTNQIKEVERICRESNCYNPERVKNFLKEAKLTDQLPLIIVCDRFDFVHDLVLYLYRNNLQKYIEIYVQKVNPSRLPVVVGGLLDVDCSEDIIKNLILVVKGQFSTDELVEEVEKRNRLKLLLPWLESRVHEGCVEPATHNALAKIYIDSNNNPERYLKENQYYDSRVVGRYCEKRDPHLACVAYERGLCDRELIAVCNENSLFKSEARYLVGRRDAELWAEVLSESNPYKRQLIDQVVQTALSETQDPDDISVTVKAFMTADLPNELIELLEKIILDSSVFSDHRNLQNLLILTAIKADRTRVMDYINRLENYDAPDIANIAISNQLYEEAFAIFKKFDVNTSAIQVLIDQVNNLERANEFAERCNEPAVWSQLAKAQLQQGLVKEAIDSYIKADDPSAYVDVVDVASKVESWDDLVRYLQMARKKARESYIESELIYAYARTGRLADLEEFISGPNHADIQKIGNRCFSDGMYDAAKLLYNNVSNFARLAITLVYLKEFQGAVDSARKANSTRTWKEVCFACVDAEEFRLAQMCGLHIVVHADELEDLINYYQNRGYFDELIALLESALGLERAHMGMFTELAILYSKFKPSKMREHLELFWSRVNIPKVLRAAESAHLWSELVFLYDKYEEYDNAVLAMMAHPTEAWREGHFKDIITKVANIELYYKAIEFYLDFKPLLLNDMLLVLAPRMDHTRAVSYFSKTGYLPLVKPYLRSVQSLNNKAINEALNGLLIDEEDYQGLRNSIDGFDNFDNIALAQKLEKHELTEFRRIAAYLYKGNNRWKQSVELCKKDKLYKDAMEYAAESCKQDIAEELLGWFLERDAYDCFAACLYQCYDLLRPDVILELAWKHKIVDFAMPYLIQVLREYTTKVDKLELNEAQREKEDDSTEHKNIIQMEPQLMITAGPAMGIPPQYAQNYPPGAATVTAAGGRNMGYPYL</sequence>
<dbReference type="EMBL" id="Z14133">
    <property type="protein sequence ID" value="CAA78507.1"/>
    <property type="molecule type" value="mRNA"/>
</dbReference>
<dbReference type="EMBL" id="AE014298">
    <property type="protein sequence ID" value="AAF48522.1"/>
    <property type="molecule type" value="Genomic_DNA"/>
</dbReference>
<dbReference type="EMBL" id="AE014298">
    <property type="protein sequence ID" value="AAN09367.1"/>
    <property type="molecule type" value="Genomic_DNA"/>
</dbReference>
<dbReference type="EMBL" id="AE014298">
    <property type="protein sequence ID" value="AAS65352.1"/>
    <property type="molecule type" value="Genomic_DNA"/>
</dbReference>
<dbReference type="EMBL" id="AE014298">
    <property type="protein sequence ID" value="AAS65353.1"/>
    <property type="molecule type" value="Genomic_DNA"/>
</dbReference>
<dbReference type="EMBL" id="AE014298">
    <property type="protein sequence ID" value="ABW09424.1"/>
    <property type="molecule type" value="Genomic_DNA"/>
</dbReference>
<dbReference type="EMBL" id="AE014298">
    <property type="protein sequence ID" value="ABW09425.1"/>
    <property type="molecule type" value="Genomic_DNA"/>
</dbReference>
<dbReference type="EMBL" id="AY119615">
    <property type="protein sequence ID" value="AAM50269.1"/>
    <property type="molecule type" value="mRNA"/>
</dbReference>
<dbReference type="PIR" id="S52588">
    <property type="entry name" value="S52588"/>
</dbReference>
<dbReference type="RefSeq" id="NP_001096993.1">
    <property type="nucleotide sequence ID" value="NM_001103523.2"/>
</dbReference>
<dbReference type="RefSeq" id="NP_001096994.1">
    <property type="nucleotide sequence ID" value="NM_001103524.2"/>
</dbReference>
<dbReference type="RefSeq" id="NP_001285300.1">
    <property type="nucleotide sequence ID" value="NM_001298371.1"/>
</dbReference>
<dbReference type="RefSeq" id="NP_477042.1">
    <property type="nucleotide sequence ID" value="NM_057694.3"/>
</dbReference>
<dbReference type="RefSeq" id="NP_727901.1">
    <property type="nucleotide sequence ID" value="NM_167466.2"/>
</dbReference>
<dbReference type="RefSeq" id="NP_996451.1">
    <property type="nucleotide sequence ID" value="NM_206728.2"/>
</dbReference>
<dbReference type="RefSeq" id="NP_996452.1">
    <property type="nucleotide sequence ID" value="NM_206729.2"/>
</dbReference>
<dbReference type="SMR" id="P29742"/>
<dbReference type="BioGRID" id="58885">
    <property type="interactions" value="113"/>
</dbReference>
<dbReference type="ComplexPortal" id="CPX-2792">
    <property type="entry name" value="Clathrin complex"/>
</dbReference>
<dbReference type="DIP" id="DIP-17970N"/>
<dbReference type="FunCoup" id="P29742">
    <property type="interactions" value="2450"/>
</dbReference>
<dbReference type="IntAct" id="P29742">
    <property type="interactions" value="83"/>
</dbReference>
<dbReference type="MINT" id="P29742"/>
<dbReference type="STRING" id="7227.FBpp0089398"/>
<dbReference type="PaxDb" id="7227-FBpp0073966"/>
<dbReference type="EnsemblMetazoa" id="FBtr0074179">
    <property type="protein sequence ID" value="FBpp0073966"/>
    <property type="gene ID" value="FBgn0000319"/>
</dbReference>
<dbReference type="EnsemblMetazoa" id="FBtr0074180">
    <property type="protein sequence ID" value="FBpp0073967"/>
    <property type="gene ID" value="FBgn0000319"/>
</dbReference>
<dbReference type="EnsemblMetazoa" id="FBtr0074181">
    <property type="protein sequence ID" value="FBpp0089397"/>
    <property type="gene ID" value="FBgn0000319"/>
</dbReference>
<dbReference type="EnsemblMetazoa" id="FBtr0074182">
    <property type="protein sequence ID" value="FBpp0089398"/>
    <property type="gene ID" value="FBgn0000319"/>
</dbReference>
<dbReference type="EnsemblMetazoa" id="FBtr0112797">
    <property type="protein sequence ID" value="FBpp0111709"/>
    <property type="gene ID" value="FBgn0000319"/>
</dbReference>
<dbReference type="EnsemblMetazoa" id="FBtr0112798">
    <property type="protein sequence ID" value="FBpp0111710"/>
    <property type="gene ID" value="FBgn0000319"/>
</dbReference>
<dbReference type="EnsemblMetazoa" id="FBtr0339445">
    <property type="protein sequence ID" value="FBpp0308531"/>
    <property type="gene ID" value="FBgn0000319"/>
</dbReference>
<dbReference type="GeneID" id="32537"/>
<dbReference type="KEGG" id="dme:Dmel_CG9012"/>
<dbReference type="AGR" id="FB:FBgn0000319"/>
<dbReference type="CTD" id="32537"/>
<dbReference type="FlyBase" id="FBgn0000319">
    <property type="gene designation" value="Chc"/>
</dbReference>
<dbReference type="VEuPathDB" id="VectorBase:FBgn0000319"/>
<dbReference type="eggNOG" id="KOG0985">
    <property type="taxonomic scope" value="Eukaryota"/>
</dbReference>
<dbReference type="HOGENOM" id="CLU_002136_0_0_1"/>
<dbReference type="InParanoid" id="P29742"/>
<dbReference type="OMA" id="HCYDLLH"/>
<dbReference type="OrthoDB" id="2113814at2759"/>
<dbReference type="PhylomeDB" id="P29742"/>
<dbReference type="Reactome" id="R-DME-177504">
    <property type="pathway name" value="Retrograde neurotrophin signalling"/>
</dbReference>
<dbReference type="Reactome" id="R-DME-190873">
    <property type="pathway name" value="Gap junction degradation"/>
</dbReference>
<dbReference type="Reactome" id="R-DME-196025">
    <property type="pathway name" value="Formation of annular gap junctions"/>
</dbReference>
<dbReference type="Reactome" id="R-DME-3928665">
    <property type="pathway name" value="EPH-ephrin mediated repulsion of cells"/>
</dbReference>
<dbReference type="Reactome" id="R-DME-432720">
    <property type="pathway name" value="Lysosome Vesicle Biogenesis"/>
</dbReference>
<dbReference type="Reactome" id="R-DME-432722">
    <property type="pathway name" value="Golgi Associated Vesicle Biogenesis"/>
</dbReference>
<dbReference type="Reactome" id="R-DME-437239">
    <property type="pathway name" value="Recycling pathway of L1"/>
</dbReference>
<dbReference type="Reactome" id="R-DME-5099900">
    <property type="pathway name" value="WNT5A-dependent internalization of FZD4"/>
</dbReference>
<dbReference type="Reactome" id="R-DME-5140745">
    <property type="pathway name" value="WNT5A-dependent internalization of FZD2, FZD5 and ROR2"/>
</dbReference>
<dbReference type="Reactome" id="R-DME-8856825">
    <property type="pathway name" value="Cargo recognition for clathrin-mediated endocytosis"/>
</dbReference>
<dbReference type="Reactome" id="R-DME-8856828">
    <property type="pathway name" value="Clathrin-mediated endocytosis"/>
</dbReference>
<dbReference type="Reactome" id="R-DME-8866427">
    <property type="pathway name" value="VLDLR internalisation and degradation"/>
</dbReference>
<dbReference type="Reactome" id="R-DME-8964038">
    <property type="pathway name" value="LDL clearance"/>
</dbReference>
<dbReference type="Reactome" id="R-DME-9013420">
    <property type="pathway name" value="RHOU GTPase cycle"/>
</dbReference>
<dbReference type="Reactome" id="R-DME-9013424">
    <property type="pathway name" value="RHOV GTPase cycle"/>
</dbReference>
<dbReference type="SignaLink" id="P29742"/>
<dbReference type="BioGRID-ORCS" id="32537">
    <property type="hits" value="1 hit in 3 CRISPR screens"/>
</dbReference>
<dbReference type="ChiTaRS" id="Chc">
    <property type="organism name" value="fly"/>
</dbReference>
<dbReference type="GenomeRNAi" id="32537"/>
<dbReference type="PRO" id="PR:P29742"/>
<dbReference type="Proteomes" id="UP000000803">
    <property type="component" value="Chromosome X"/>
</dbReference>
<dbReference type="Bgee" id="FBgn0000319">
    <property type="expression patterns" value="Expressed in embryonic/larval hemocyte (Drosophila) and 271 other cell types or tissues"/>
</dbReference>
<dbReference type="ExpressionAtlas" id="P29742">
    <property type="expression patterns" value="baseline and differential"/>
</dbReference>
<dbReference type="GO" id="GO:0005938">
    <property type="term" value="C:cell cortex"/>
    <property type="evidence" value="ECO:0000314"/>
    <property type="project" value="FlyBase"/>
</dbReference>
<dbReference type="GO" id="GO:0030132">
    <property type="term" value="C:clathrin coat of coated pit"/>
    <property type="evidence" value="ECO:0007669"/>
    <property type="project" value="InterPro"/>
</dbReference>
<dbReference type="GO" id="GO:0030130">
    <property type="term" value="C:clathrin coat of trans-Golgi network vesicle"/>
    <property type="evidence" value="ECO:0007669"/>
    <property type="project" value="InterPro"/>
</dbReference>
<dbReference type="GO" id="GO:0071439">
    <property type="term" value="C:clathrin complex"/>
    <property type="evidence" value="ECO:0000250"/>
    <property type="project" value="FlyBase"/>
</dbReference>
<dbReference type="GO" id="GO:0045334">
    <property type="term" value="C:clathrin-coated endocytic vesicle"/>
    <property type="evidence" value="ECO:0000318"/>
    <property type="project" value="GO_Central"/>
</dbReference>
<dbReference type="GO" id="GO:0005905">
    <property type="term" value="C:clathrin-coated pit"/>
    <property type="evidence" value="ECO:0000314"/>
    <property type="project" value="FlyBase"/>
</dbReference>
<dbReference type="GO" id="GO:0030136">
    <property type="term" value="C:clathrin-coated vesicle"/>
    <property type="evidence" value="ECO:0000314"/>
    <property type="project" value="FlyBase"/>
</dbReference>
<dbReference type="GO" id="GO:0031410">
    <property type="term" value="C:cytoplasmic vesicle"/>
    <property type="evidence" value="ECO:0000314"/>
    <property type="project" value="FlyBase"/>
</dbReference>
<dbReference type="GO" id="GO:0048471">
    <property type="term" value="C:perinuclear region of cytoplasm"/>
    <property type="evidence" value="ECO:0000314"/>
    <property type="project" value="FlyBase"/>
</dbReference>
<dbReference type="GO" id="GO:0005886">
    <property type="term" value="C:plasma membrane"/>
    <property type="evidence" value="ECO:0000314"/>
    <property type="project" value="FlyBase"/>
</dbReference>
<dbReference type="GO" id="GO:0098793">
    <property type="term" value="C:presynapse"/>
    <property type="evidence" value="ECO:0007669"/>
    <property type="project" value="GOC"/>
</dbReference>
<dbReference type="GO" id="GO:0030141">
    <property type="term" value="C:secretory granule"/>
    <property type="evidence" value="ECO:0000314"/>
    <property type="project" value="FlyBase"/>
</dbReference>
<dbReference type="GO" id="GO:0005802">
    <property type="term" value="C:trans-Golgi network"/>
    <property type="evidence" value="ECO:0000314"/>
    <property type="project" value="FlyBase"/>
</dbReference>
<dbReference type="GO" id="GO:0032051">
    <property type="term" value="F:clathrin light chain binding"/>
    <property type="evidence" value="ECO:0000250"/>
    <property type="project" value="FlyBase"/>
</dbReference>
<dbReference type="GO" id="GO:0005198">
    <property type="term" value="F:structural molecule activity"/>
    <property type="evidence" value="ECO:0007669"/>
    <property type="project" value="InterPro"/>
</dbReference>
<dbReference type="GO" id="GO:0007268">
    <property type="term" value="P:chemical synaptic transmission"/>
    <property type="evidence" value="ECO:0000315"/>
    <property type="project" value="FlyBase"/>
</dbReference>
<dbReference type="GO" id="GO:0048749">
    <property type="term" value="P:compound eye development"/>
    <property type="evidence" value="ECO:0000315"/>
    <property type="project" value="FlyBase"/>
</dbReference>
<dbReference type="GO" id="GO:0046667">
    <property type="term" value="P:compound eye retinal cell programmed cell death"/>
    <property type="evidence" value="ECO:0000315"/>
    <property type="project" value="FlyBase"/>
</dbReference>
<dbReference type="GO" id="GO:0006897">
    <property type="term" value="P:endocytosis"/>
    <property type="evidence" value="ECO:0000315"/>
    <property type="project" value="FlyBase"/>
</dbReference>
<dbReference type="GO" id="GO:0030198">
    <property type="term" value="P:extracellular matrix organization"/>
    <property type="evidence" value="ECO:0000315"/>
    <property type="project" value="FlyBase"/>
</dbReference>
<dbReference type="GO" id="GO:0006886">
    <property type="term" value="P:intracellular protein transport"/>
    <property type="evidence" value="ECO:0007669"/>
    <property type="project" value="InterPro"/>
</dbReference>
<dbReference type="GO" id="GO:0035002">
    <property type="term" value="P:liquid clearance, open tracheal system"/>
    <property type="evidence" value="ECO:0000315"/>
    <property type="project" value="FlyBase"/>
</dbReference>
<dbReference type="GO" id="GO:0008103">
    <property type="term" value="P:oocyte microtubule cytoskeleton polarization"/>
    <property type="evidence" value="ECO:0000315"/>
    <property type="project" value="FlyBase"/>
</dbReference>
<dbReference type="GO" id="GO:0045451">
    <property type="term" value="P:pole plasm oskar mRNA localization"/>
    <property type="evidence" value="ECO:0000315"/>
    <property type="project" value="FlyBase"/>
</dbReference>
<dbReference type="GO" id="GO:0010508">
    <property type="term" value="P:positive regulation of autophagy"/>
    <property type="evidence" value="ECO:0000315"/>
    <property type="project" value="FlyBase"/>
</dbReference>
<dbReference type="GO" id="GO:0045807">
    <property type="term" value="P:positive regulation of endocytosis"/>
    <property type="evidence" value="ECO:0000315"/>
    <property type="project" value="FlyBase"/>
</dbReference>
<dbReference type="GO" id="GO:0031623">
    <property type="term" value="P:receptor internalization"/>
    <property type="evidence" value="ECO:0000316"/>
    <property type="project" value="FlyBase"/>
</dbReference>
<dbReference type="GO" id="GO:0006898">
    <property type="term" value="P:receptor-mediated endocytosis"/>
    <property type="evidence" value="ECO:0000315"/>
    <property type="project" value="FlyBase"/>
</dbReference>
<dbReference type="GO" id="GO:0040008">
    <property type="term" value="P:regulation of growth"/>
    <property type="evidence" value="ECO:0000315"/>
    <property type="project" value="FlyBase"/>
</dbReference>
<dbReference type="GO" id="GO:0035159">
    <property type="term" value="P:regulation of tube length, open tracheal system"/>
    <property type="evidence" value="ECO:0000315"/>
    <property type="project" value="FlyBase"/>
</dbReference>
<dbReference type="GO" id="GO:0033363">
    <property type="term" value="P:secretory granule organization"/>
    <property type="evidence" value="ECO:0000315"/>
    <property type="project" value="FlyBase"/>
</dbReference>
<dbReference type="GO" id="GO:0007291">
    <property type="term" value="P:sperm individualization"/>
    <property type="evidence" value="ECO:0000315"/>
    <property type="project" value="FlyBase"/>
</dbReference>
<dbReference type="GO" id="GO:0016079">
    <property type="term" value="P:synaptic vesicle exocytosis"/>
    <property type="evidence" value="ECO:0000315"/>
    <property type="project" value="FlyBase"/>
</dbReference>
<dbReference type="FunFam" id="1.25.40.10:FF:000001">
    <property type="entry name" value="Clathrin heavy chain"/>
    <property type="match status" value="1"/>
</dbReference>
<dbReference type="FunFam" id="1.25.40.10:FF:000002">
    <property type="entry name" value="Clathrin heavy chain"/>
    <property type="match status" value="1"/>
</dbReference>
<dbReference type="FunFam" id="1.25.40.10:FF:000007">
    <property type="entry name" value="Clathrin heavy chain"/>
    <property type="match status" value="1"/>
</dbReference>
<dbReference type="FunFam" id="1.25.40.10:FF:000095">
    <property type="entry name" value="Clathrin heavy chain"/>
    <property type="match status" value="1"/>
</dbReference>
<dbReference type="FunFam" id="1.25.40.730:FF:000001">
    <property type="entry name" value="Clathrin heavy chain"/>
    <property type="match status" value="1"/>
</dbReference>
<dbReference type="FunFam" id="2.130.10.110:FF:000001">
    <property type="entry name" value="Clathrin heavy chain"/>
    <property type="match status" value="1"/>
</dbReference>
<dbReference type="Gene3D" id="1.25.40.730">
    <property type="match status" value="1"/>
</dbReference>
<dbReference type="Gene3D" id="2.130.10.110">
    <property type="entry name" value="Clathrin heavy-chain terminal domain"/>
    <property type="match status" value="1"/>
</dbReference>
<dbReference type="Gene3D" id="1.25.40.10">
    <property type="entry name" value="Tetratricopeptide repeat domain"/>
    <property type="match status" value="4"/>
</dbReference>
<dbReference type="InterPro" id="IPR016024">
    <property type="entry name" value="ARM-type_fold"/>
</dbReference>
<dbReference type="InterPro" id="IPR055358">
    <property type="entry name" value="CHCR"/>
</dbReference>
<dbReference type="InterPro" id="IPR000547">
    <property type="entry name" value="Clathrin_H-chain/VPS_repeat"/>
</dbReference>
<dbReference type="InterPro" id="IPR015348">
    <property type="entry name" value="Clathrin_H-chain_linker_core"/>
</dbReference>
<dbReference type="InterPro" id="IPR016025">
    <property type="entry name" value="Clathrin_H-chain_N"/>
</dbReference>
<dbReference type="InterPro" id="IPR022365">
    <property type="entry name" value="Clathrin_H-chain_propeller_rpt"/>
</dbReference>
<dbReference type="InterPro" id="IPR016341">
    <property type="entry name" value="Clathrin_heavy_chain"/>
</dbReference>
<dbReference type="InterPro" id="IPR011990">
    <property type="entry name" value="TPR-like_helical_dom_sf"/>
</dbReference>
<dbReference type="PANTHER" id="PTHR10292:SF1">
    <property type="entry name" value="CLATHRIN HEAVY CHAIN"/>
    <property type="match status" value="1"/>
</dbReference>
<dbReference type="PANTHER" id="PTHR10292">
    <property type="entry name" value="CLATHRIN HEAVY CHAIN RELATED"/>
    <property type="match status" value="1"/>
</dbReference>
<dbReference type="Pfam" id="PF00637">
    <property type="entry name" value="Clathrin"/>
    <property type="match status" value="7"/>
</dbReference>
<dbReference type="Pfam" id="PF09268">
    <property type="entry name" value="Clathrin-link"/>
    <property type="match status" value="1"/>
</dbReference>
<dbReference type="Pfam" id="PF13838">
    <property type="entry name" value="Clathrin_H_link"/>
    <property type="match status" value="1"/>
</dbReference>
<dbReference type="Pfam" id="PF01394">
    <property type="entry name" value="Clathrin_propel"/>
    <property type="match status" value="5"/>
</dbReference>
<dbReference type="PIRSF" id="PIRSF002290">
    <property type="entry name" value="Clathrin_H_chain"/>
    <property type="match status" value="1"/>
</dbReference>
<dbReference type="SMART" id="SM00299">
    <property type="entry name" value="CLH"/>
    <property type="match status" value="7"/>
</dbReference>
<dbReference type="SUPFAM" id="SSF48371">
    <property type="entry name" value="ARM repeat"/>
    <property type="match status" value="6"/>
</dbReference>
<dbReference type="SUPFAM" id="SSF50989">
    <property type="entry name" value="Clathrin heavy-chain terminal domain"/>
    <property type="match status" value="1"/>
</dbReference>
<dbReference type="PROSITE" id="PS50236">
    <property type="entry name" value="CHCR"/>
    <property type="match status" value="7"/>
</dbReference>
<reference key="1">
    <citation type="journal article" date="1993" name="Genetics">
        <title>The Drosophila clathrin heavy chain gene: clathrin function is essential in a multicellular organism.</title>
        <authorList>
            <person name="Bazinet C."/>
            <person name="Katzen A.L."/>
            <person name="Morgan M."/>
            <person name="Mahowald A.P."/>
            <person name="Lemmon S.K."/>
        </authorList>
    </citation>
    <scope>NUCLEOTIDE SEQUENCE [MRNA]</scope>
    <source>
        <strain>Canton-S</strain>
        <tissue>Head</tissue>
    </source>
</reference>
<reference key="2">
    <citation type="journal article" date="2000" name="Science">
        <title>The genome sequence of Drosophila melanogaster.</title>
        <authorList>
            <person name="Adams M.D."/>
            <person name="Celniker S.E."/>
            <person name="Holt R.A."/>
            <person name="Evans C.A."/>
            <person name="Gocayne J.D."/>
            <person name="Amanatides P.G."/>
            <person name="Scherer S.E."/>
            <person name="Li P.W."/>
            <person name="Hoskins R.A."/>
            <person name="Galle R.F."/>
            <person name="George R.A."/>
            <person name="Lewis S.E."/>
            <person name="Richards S."/>
            <person name="Ashburner M."/>
            <person name="Henderson S.N."/>
            <person name="Sutton G.G."/>
            <person name="Wortman J.R."/>
            <person name="Yandell M.D."/>
            <person name="Zhang Q."/>
            <person name="Chen L.X."/>
            <person name="Brandon R.C."/>
            <person name="Rogers Y.-H.C."/>
            <person name="Blazej R.G."/>
            <person name="Champe M."/>
            <person name="Pfeiffer B.D."/>
            <person name="Wan K.H."/>
            <person name="Doyle C."/>
            <person name="Baxter E.G."/>
            <person name="Helt G."/>
            <person name="Nelson C.R."/>
            <person name="Miklos G.L.G."/>
            <person name="Abril J.F."/>
            <person name="Agbayani A."/>
            <person name="An H.-J."/>
            <person name="Andrews-Pfannkoch C."/>
            <person name="Baldwin D."/>
            <person name="Ballew R.M."/>
            <person name="Basu A."/>
            <person name="Baxendale J."/>
            <person name="Bayraktaroglu L."/>
            <person name="Beasley E.M."/>
            <person name="Beeson K.Y."/>
            <person name="Benos P.V."/>
            <person name="Berman B.P."/>
            <person name="Bhandari D."/>
            <person name="Bolshakov S."/>
            <person name="Borkova D."/>
            <person name="Botchan M.R."/>
            <person name="Bouck J."/>
            <person name="Brokstein P."/>
            <person name="Brottier P."/>
            <person name="Burtis K.C."/>
            <person name="Busam D.A."/>
            <person name="Butler H."/>
            <person name="Cadieu E."/>
            <person name="Center A."/>
            <person name="Chandra I."/>
            <person name="Cherry J.M."/>
            <person name="Cawley S."/>
            <person name="Dahlke C."/>
            <person name="Davenport L.B."/>
            <person name="Davies P."/>
            <person name="de Pablos B."/>
            <person name="Delcher A."/>
            <person name="Deng Z."/>
            <person name="Mays A.D."/>
            <person name="Dew I."/>
            <person name="Dietz S.M."/>
            <person name="Dodson K."/>
            <person name="Doup L.E."/>
            <person name="Downes M."/>
            <person name="Dugan-Rocha S."/>
            <person name="Dunkov B.C."/>
            <person name="Dunn P."/>
            <person name="Durbin K.J."/>
            <person name="Evangelista C.C."/>
            <person name="Ferraz C."/>
            <person name="Ferriera S."/>
            <person name="Fleischmann W."/>
            <person name="Fosler C."/>
            <person name="Gabrielian A.E."/>
            <person name="Garg N.S."/>
            <person name="Gelbart W.M."/>
            <person name="Glasser K."/>
            <person name="Glodek A."/>
            <person name="Gong F."/>
            <person name="Gorrell J.H."/>
            <person name="Gu Z."/>
            <person name="Guan P."/>
            <person name="Harris M."/>
            <person name="Harris N.L."/>
            <person name="Harvey D.A."/>
            <person name="Heiman T.J."/>
            <person name="Hernandez J.R."/>
            <person name="Houck J."/>
            <person name="Hostin D."/>
            <person name="Houston K.A."/>
            <person name="Howland T.J."/>
            <person name="Wei M.-H."/>
            <person name="Ibegwam C."/>
            <person name="Jalali M."/>
            <person name="Kalush F."/>
            <person name="Karpen G.H."/>
            <person name="Ke Z."/>
            <person name="Kennison J.A."/>
            <person name="Ketchum K.A."/>
            <person name="Kimmel B.E."/>
            <person name="Kodira C.D."/>
            <person name="Kraft C.L."/>
            <person name="Kravitz S."/>
            <person name="Kulp D."/>
            <person name="Lai Z."/>
            <person name="Lasko P."/>
            <person name="Lei Y."/>
            <person name="Levitsky A.A."/>
            <person name="Li J.H."/>
            <person name="Li Z."/>
            <person name="Liang Y."/>
            <person name="Lin X."/>
            <person name="Liu X."/>
            <person name="Mattei B."/>
            <person name="McIntosh T.C."/>
            <person name="McLeod M.P."/>
            <person name="McPherson D."/>
            <person name="Merkulov G."/>
            <person name="Milshina N.V."/>
            <person name="Mobarry C."/>
            <person name="Morris J."/>
            <person name="Moshrefi A."/>
            <person name="Mount S.M."/>
            <person name="Moy M."/>
            <person name="Murphy B."/>
            <person name="Murphy L."/>
            <person name="Muzny D.M."/>
            <person name="Nelson D.L."/>
            <person name="Nelson D.R."/>
            <person name="Nelson K.A."/>
            <person name="Nixon K."/>
            <person name="Nusskern D.R."/>
            <person name="Pacleb J.M."/>
            <person name="Palazzolo M."/>
            <person name="Pittman G.S."/>
            <person name="Pan S."/>
            <person name="Pollard J."/>
            <person name="Puri V."/>
            <person name="Reese M.G."/>
            <person name="Reinert K."/>
            <person name="Remington K."/>
            <person name="Saunders R.D.C."/>
            <person name="Scheeler F."/>
            <person name="Shen H."/>
            <person name="Shue B.C."/>
            <person name="Siden-Kiamos I."/>
            <person name="Simpson M."/>
            <person name="Skupski M.P."/>
            <person name="Smith T.J."/>
            <person name="Spier E."/>
            <person name="Spradling A.C."/>
            <person name="Stapleton M."/>
            <person name="Strong R."/>
            <person name="Sun E."/>
            <person name="Svirskas R."/>
            <person name="Tector C."/>
            <person name="Turner R."/>
            <person name="Venter E."/>
            <person name="Wang A.H."/>
            <person name="Wang X."/>
            <person name="Wang Z.-Y."/>
            <person name="Wassarman D.A."/>
            <person name="Weinstock G.M."/>
            <person name="Weissenbach J."/>
            <person name="Williams S.M."/>
            <person name="Woodage T."/>
            <person name="Worley K.C."/>
            <person name="Wu D."/>
            <person name="Yang S."/>
            <person name="Yao Q.A."/>
            <person name="Ye J."/>
            <person name="Yeh R.-F."/>
            <person name="Zaveri J.S."/>
            <person name="Zhan M."/>
            <person name="Zhang G."/>
            <person name="Zhao Q."/>
            <person name="Zheng L."/>
            <person name="Zheng X.H."/>
            <person name="Zhong F.N."/>
            <person name="Zhong W."/>
            <person name="Zhou X."/>
            <person name="Zhu S.C."/>
            <person name="Zhu X."/>
            <person name="Smith H.O."/>
            <person name="Gibbs R.A."/>
            <person name="Myers E.W."/>
            <person name="Rubin G.M."/>
            <person name="Venter J.C."/>
        </authorList>
    </citation>
    <scope>NUCLEOTIDE SEQUENCE [LARGE SCALE GENOMIC DNA]</scope>
    <source>
        <strain>Berkeley</strain>
    </source>
</reference>
<reference key="3">
    <citation type="journal article" date="2002" name="Genome Biol.">
        <title>Annotation of the Drosophila melanogaster euchromatic genome: a systematic review.</title>
        <authorList>
            <person name="Misra S."/>
            <person name="Crosby M.A."/>
            <person name="Mungall C.J."/>
            <person name="Matthews B.B."/>
            <person name="Campbell K.S."/>
            <person name="Hradecky P."/>
            <person name="Huang Y."/>
            <person name="Kaminker J.S."/>
            <person name="Millburn G.H."/>
            <person name="Prochnik S.E."/>
            <person name="Smith C.D."/>
            <person name="Tupy J.L."/>
            <person name="Whitfield E.J."/>
            <person name="Bayraktaroglu L."/>
            <person name="Berman B.P."/>
            <person name="Bettencourt B.R."/>
            <person name="Celniker S.E."/>
            <person name="de Grey A.D.N.J."/>
            <person name="Drysdale R.A."/>
            <person name="Harris N.L."/>
            <person name="Richter J."/>
            <person name="Russo S."/>
            <person name="Schroeder A.J."/>
            <person name="Shu S.Q."/>
            <person name="Stapleton M."/>
            <person name="Yamada C."/>
            <person name="Ashburner M."/>
            <person name="Gelbart W.M."/>
            <person name="Rubin G.M."/>
            <person name="Lewis S.E."/>
        </authorList>
    </citation>
    <scope>GENOME REANNOTATION</scope>
    <source>
        <strain>Berkeley</strain>
    </source>
</reference>
<reference key="4">
    <citation type="journal article" date="2002" name="Genome Biol.">
        <title>A Drosophila full-length cDNA resource.</title>
        <authorList>
            <person name="Stapleton M."/>
            <person name="Carlson J.W."/>
            <person name="Brokstein P."/>
            <person name="Yu C."/>
            <person name="Champe M."/>
            <person name="George R.A."/>
            <person name="Guarin H."/>
            <person name="Kronmiller B."/>
            <person name="Pacleb J.M."/>
            <person name="Park S."/>
            <person name="Wan K.H."/>
            <person name="Rubin G.M."/>
            <person name="Celniker S.E."/>
        </authorList>
    </citation>
    <scope>NUCLEOTIDE SEQUENCE [LARGE SCALE MRNA]</scope>
    <source>
        <strain>Berkeley</strain>
        <tissue>Embryo</tissue>
    </source>
</reference>
<reference key="5">
    <citation type="journal article" date="2014" name="PLoS Genet.">
        <title>GOLPH3 is essential for contractile ring formation and Rab11 localization to the cleavage site during cytokinesis in Drosophila melanogaster.</title>
        <authorList>
            <person name="Sechi S."/>
            <person name="Colotti G."/>
            <person name="Belloni G."/>
            <person name="Mattei V."/>
            <person name="Frappaolo A."/>
            <person name="Raffa G.D."/>
            <person name="Fuller M.T."/>
            <person name="Giansanti M.G."/>
        </authorList>
    </citation>
    <scope>INTERACTION WITH SAU</scope>
</reference>